<feature type="signal peptide" evidence="2">
    <location>
        <begin position="1"/>
        <end position="24"/>
    </location>
</feature>
<feature type="propeptide" id="PRO_0000006363" evidence="2">
    <location>
        <begin position="25"/>
        <end position="34"/>
    </location>
</feature>
<feature type="chain" id="PRO_0000006364" description="Peptidyl-glycine alpha-amidating monooxygenase">
    <location>
        <begin position="35"/>
        <end position="979"/>
    </location>
</feature>
<feature type="topological domain" description="Intragranular" evidence="4">
    <location>
        <begin position="35"/>
        <end position="869"/>
    </location>
</feature>
<feature type="transmembrane region" description="Helical" evidence="4">
    <location>
        <begin position="870"/>
        <end position="893"/>
    </location>
</feature>
<feature type="topological domain" description="Cytoplasmic" evidence="4">
    <location>
        <begin position="894"/>
        <end position="979"/>
    </location>
</feature>
<feature type="repeat" description="NHL 1">
    <location>
        <begin position="501"/>
        <end position="544"/>
    </location>
</feature>
<feature type="repeat" description="NHL 2">
    <location>
        <begin position="570"/>
        <end position="611"/>
    </location>
</feature>
<feature type="repeat" description="NHL 3">
    <location>
        <begin position="620"/>
        <end position="665"/>
    </location>
</feature>
<feature type="repeat" description="NHL 4">
    <location>
        <begin position="673"/>
        <end position="717"/>
    </location>
</feature>
<feature type="repeat" description="NHL 5">
    <location>
        <begin position="769"/>
        <end position="812"/>
    </location>
</feature>
<feature type="region of interest" description="Peptidylglycine alpha-hydroxylating monooxygenase" evidence="2">
    <location>
        <begin position="1"/>
        <end position="497"/>
    </location>
</feature>
<feature type="region of interest" description="Peptidyl-alpha-hydroxyglycine alpha-amidating lyase" evidence="2">
    <location>
        <begin position="498"/>
        <end position="823"/>
    </location>
</feature>
<feature type="region of interest" description="Interaction with RASSF9" evidence="2">
    <location>
        <begin position="931"/>
        <end position="948"/>
    </location>
</feature>
<feature type="region of interest" description="Disordered" evidence="5">
    <location>
        <begin position="943"/>
        <end position="979"/>
    </location>
</feature>
<feature type="compositionally biased region" description="Acidic residues" evidence="5">
    <location>
        <begin position="955"/>
        <end position="968"/>
    </location>
</feature>
<feature type="binding site" evidence="2">
    <location>
        <position position="106"/>
    </location>
    <ligand>
        <name>Cu(2+)</name>
        <dbReference type="ChEBI" id="CHEBI:29036"/>
        <label>1</label>
        <note>catalytic</note>
    </ligand>
</feature>
<feature type="binding site" evidence="2">
    <location>
        <position position="107"/>
    </location>
    <ligand>
        <name>Cu(2+)</name>
        <dbReference type="ChEBI" id="CHEBI:29036"/>
        <label>1</label>
        <note>catalytic</note>
    </ligand>
</feature>
<feature type="binding site" evidence="2">
    <location>
        <position position="171"/>
    </location>
    <ligand>
        <name>Cu(2+)</name>
        <dbReference type="ChEBI" id="CHEBI:29036"/>
        <label>1</label>
        <note>catalytic</note>
    </ligand>
</feature>
<feature type="binding site" evidence="2">
    <location>
        <position position="241"/>
    </location>
    <ligand>
        <name>Cu(2+)</name>
        <dbReference type="ChEBI" id="CHEBI:29036"/>
        <label>2</label>
        <note>catalytic</note>
    </ligand>
</feature>
<feature type="binding site" evidence="2">
    <location>
        <position position="243"/>
    </location>
    <ligand>
        <name>Cu(2+)</name>
        <dbReference type="ChEBI" id="CHEBI:29036"/>
        <label>2</label>
        <note>catalytic</note>
    </ligand>
</feature>
<feature type="binding site" evidence="2">
    <location>
        <position position="313"/>
    </location>
    <ligand>
        <name>Cu(2+)</name>
        <dbReference type="ChEBI" id="CHEBI:29036"/>
        <label>2</label>
        <note>catalytic</note>
    </ligand>
</feature>
<feature type="binding site" evidence="2">
    <location>
        <position position="520"/>
    </location>
    <ligand>
        <name>Ca(2+)</name>
        <dbReference type="ChEBI" id="CHEBI:29108"/>
        <note>structural</note>
    </ligand>
</feature>
<feature type="binding site" evidence="2">
    <location>
        <position position="533"/>
    </location>
    <ligand>
        <name>a protein</name>
        <dbReference type="ChEBI" id="CHEBI:16541"/>
    </ligand>
    <ligandPart>
        <name>C-terminal Xaa-(2S)-2-hydroxyglycine residue</name>
        <dbReference type="ChEBI" id="CHEBI:142768"/>
    </ligandPart>
</feature>
<feature type="binding site" evidence="2">
    <location>
        <position position="585"/>
    </location>
    <ligand>
        <name>Zn(2+)</name>
        <dbReference type="ChEBI" id="CHEBI:29105"/>
        <note>catalytic</note>
    </ligand>
</feature>
<feature type="binding site" evidence="2">
    <location>
        <position position="587"/>
    </location>
    <ligand>
        <name>Ca(2+)</name>
        <dbReference type="ChEBI" id="CHEBI:29108"/>
        <note>structural</note>
    </ligand>
</feature>
<feature type="binding site" evidence="2">
    <location>
        <position position="654"/>
    </location>
    <ligand>
        <name>a protein</name>
        <dbReference type="ChEBI" id="CHEBI:16541"/>
    </ligand>
    <ligandPart>
        <name>C-terminal Xaa-(2S)-2-hydroxyglycine residue</name>
        <dbReference type="ChEBI" id="CHEBI:142768"/>
    </ligandPart>
</feature>
<feature type="binding site" evidence="2">
    <location>
        <position position="690"/>
    </location>
    <ligand>
        <name>Zn(2+)</name>
        <dbReference type="ChEBI" id="CHEBI:29105"/>
        <note>catalytic</note>
    </ligand>
</feature>
<feature type="binding site" evidence="2">
    <location>
        <position position="706"/>
    </location>
    <ligand>
        <name>a protein</name>
        <dbReference type="ChEBI" id="CHEBI:16541"/>
    </ligand>
    <ligandPart>
        <name>C-terminal Xaa-(2S)-2-hydroxyglycine residue</name>
        <dbReference type="ChEBI" id="CHEBI:142768"/>
    </ligandPart>
</feature>
<feature type="binding site" evidence="2">
    <location>
        <position position="786"/>
    </location>
    <ligand>
        <name>Zn(2+)</name>
        <dbReference type="ChEBI" id="CHEBI:29105"/>
        <note>catalytic</note>
    </ligand>
</feature>
<feature type="binding site" evidence="2">
    <location>
        <position position="787"/>
    </location>
    <ligand>
        <name>Ca(2+)</name>
        <dbReference type="ChEBI" id="CHEBI:29108"/>
        <note>structural</note>
    </ligand>
</feature>
<feature type="modified residue" description="Phosphoserine" evidence="11">
    <location>
        <position position="924"/>
    </location>
</feature>
<feature type="modified residue" description="Phosphoserine" evidence="11">
    <location>
        <position position="925"/>
    </location>
</feature>
<feature type="modified residue" description="Phosphoserine" evidence="11">
    <location>
        <position position="935"/>
    </location>
</feature>
<feature type="modified residue" description="Phosphoserine" evidence="3">
    <location>
        <position position="948"/>
    </location>
</feature>
<feature type="modified residue" description="Phosphothreonine" evidence="3">
    <location>
        <position position="949"/>
    </location>
</feature>
<feature type="modified residue" description="Phosphoserine; by UHMK1" evidence="3">
    <location>
        <position position="952"/>
    </location>
</feature>
<feature type="modified residue" description="Phosphoserine" evidence="2">
    <location>
        <position position="964"/>
    </location>
</feature>
<feature type="glycosylation site" description="N-linked (GlcNAc...) asparagine" evidence="4">
    <location>
        <position position="765"/>
    </location>
</feature>
<feature type="disulfide bond" evidence="2">
    <location>
        <begin position="46"/>
        <end position="185"/>
    </location>
</feature>
<feature type="disulfide bond" evidence="2">
    <location>
        <begin position="80"/>
        <end position="125"/>
    </location>
</feature>
<feature type="disulfide bond" evidence="2">
    <location>
        <begin position="113"/>
        <end position="130"/>
    </location>
</feature>
<feature type="disulfide bond" evidence="2">
    <location>
        <begin position="226"/>
        <end position="333"/>
    </location>
</feature>
<feature type="disulfide bond" evidence="2">
    <location>
        <begin position="292"/>
        <end position="314"/>
    </location>
</feature>
<feature type="disulfide bond" evidence="2">
    <location>
        <begin position="634"/>
        <end position="655"/>
    </location>
</feature>
<feature type="disulfide bond" evidence="2">
    <location>
        <begin position="702"/>
        <end position="713"/>
    </location>
</feature>
<feature type="sequence conflict" description="In Ref. 1; AAB38364." evidence="9" ref="1">
    <original>A</original>
    <variation>R</variation>
    <location>
        <position position="970"/>
    </location>
</feature>
<gene>
    <name evidence="8 10" type="primary">Pam</name>
</gene>
<protein>
    <recommendedName>
        <fullName evidence="8">Peptidyl-glycine alpha-amidating monooxygenase</fullName>
        <shortName evidence="8">PAM</shortName>
    </recommendedName>
    <domain>
        <recommendedName>
            <fullName evidence="3">Peptidylglycine alpha-hydroxylating monooxygenase</fullName>
            <shortName evidence="3">PHM</shortName>
            <ecNumber evidence="3">1.14.17.3</ecNumber>
        </recommendedName>
    </domain>
    <domain>
        <recommendedName>
            <fullName>Peptidyl-alpha-hydroxyglycine alpha-amidating lyase</fullName>
            <ecNumber evidence="3">4.3.2.5</ecNumber>
        </recommendedName>
        <alternativeName>
            <fullName evidence="3">Peptidylamidoglycolate lyase</fullName>
            <shortName evidence="3">PAL</shortName>
        </alternativeName>
    </domain>
</protein>
<proteinExistence type="evidence at protein level"/>
<accession>P97467</accession>
<accession>E9QL07</accession>
<evidence type="ECO:0000250" key="1">
    <source>
        <dbReference type="UniProtKB" id="P10731"/>
    </source>
</evidence>
<evidence type="ECO:0000250" key="2">
    <source>
        <dbReference type="UniProtKB" id="P14925"/>
    </source>
</evidence>
<evidence type="ECO:0000250" key="3">
    <source>
        <dbReference type="UniProtKB" id="P19021"/>
    </source>
</evidence>
<evidence type="ECO:0000255" key="4"/>
<evidence type="ECO:0000256" key="5">
    <source>
        <dbReference type="SAM" id="MobiDB-lite"/>
    </source>
</evidence>
<evidence type="ECO:0000269" key="6">
    <source>
    </source>
</evidence>
<evidence type="ECO:0000269" key="7">
    <source>
    </source>
</evidence>
<evidence type="ECO:0000303" key="8">
    <source>
    </source>
</evidence>
<evidence type="ECO:0000305" key="9"/>
<evidence type="ECO:0000312" key="10">
    <source>
        <dbReference type="MGI" id="MGI:97475"/>
    </source>
</evidence>
<evidence type="ECO:0007744" key="11">
    <source>
    </source>
</evidence>
<name>AMD_MOUSE</name>
<comment type="function">
    <text evidence="3 6 7">Bifunctional enzyme that catalyzes amidation of the C-terminus of proteins (PubMed:16225857). Alpha-amidation is present at the C-terminus of many endocrine hormones and neuropeptides and is required for their activity (By similarity). C-terminal amidation also takes place in response to protein fragmentation triggered by oxidative stress, promoting degradation of amidated protein fragments by the proteasome (By similarity). Alpha-amidation involves two sequential reactions, both of which are catalyzed by separate catalytic domains of the enzyme (By similarity). The first step, catalyzed by peptidyl alpha-hydroxylating monooxygenase (PHM) domain, is the copper-, ascorbate-, and O2- dependent stereospecific hydroxylation (with S stereochemistry) at the alpha-carbon (C-alpha) of the C-terminal glycine of the peptidylglycine substrate (By similarity). The second step, catalyzed by the peptidylglycine amidoglycolate lyase (PAL) domain, is the zinc-dependent cleavage of the N-C-alpha bond, producing the alpha-amidated peptide and glyoxylate (By similarity). Similarly, catalyzes the two-step conversion of an N-fatty acylglycine to a primary fatty acid amide and glyoxylate (PubMed:27016726).</text>
</comment>
<comment type="catalytic activity">
    <reaction evidence="2">
        <text>a [peptide]-C-terminal glycine + 2 L-ascorbate + O2 = a [peptide]-C-terminal (2S)-2-hydroxyglycine + 2 monodehydro-L-ascorbate radical + H2O</text>
        <dbReference type="Rhea" id="RHEA:21452"/>
        <dbReference type="Rhea" id="RHEA-COMP:13486"/>
        <dbReference type="Rhea" id="RHEA-COMP:15321"/>
        <dbReference type="ChEBI" id="CHEBI:15377"/>
        <dbReference type="ChEBI" id="CHEBI:15379"/>
        <dbReference type="ChEBI" id="CHEBI:38290"/>
        <dbReference type="ChEBI" id="CHEBI:59513"/>
        <dbReference type="ChEBI" id="CHEBI:137000"/>
        <dbReference type="ChEBI" id="CHEBI:142768"/>
        <dbReference type="EC" id="1.14.17.3"/>
    </reaction>
</comment>
<comment type="catalytic activity">
    <reaction evidence="2">
        <text>a [peptide]-C-terminal (2S)-2-hydroxyglycine = a [peptide]-C-terminal amide + glyoxylate</text>
        <dbReference type="Rhea" id="RHEA:20924"/>
        <dbReference type="Rhea" id="RHEA-COMP:13485"/>
        <dbReference type="Rhea" id="RHEA-COMP:15321"/>
        <dbReference type="ChEBI" id="CHEBI:36655"/>
        <dbReference type="ChEBI" id="CHEBI:137001"/>
        <dbReference type="ChEBI" id="CHEBI:142768"/>
        <dbReference type="EC" id="4.3.2.5"/>
    </reaction>
</comment>
<comment type="catalytic activity">
    <reaction evidence="2">
        <text>N-dodecanoylglycine + 2 L-ascorbate + O2 = N-dodecanoyl-(2S)-hydroxyglycine + 2 monodehydro-L-ascorbate radical + H2O</text>
        <dbReference type="Rhea" id="RHEA:58540"/>
        <dbReference type="ChEBI" id="CHEBI:15377"/>
        <dbReference type="ChEBI" id="CHEBI:15379"/>
        <dbReference type="ChEBI" id="CHEBI:38290"/>
        <dbReference type="ChEBI" id="CHEBI:59513"/>
        <dbReference type="ChEBI" id="CHEBI:142678"/>
        <dbReference type="ChEBI" id="CHEBI:142693"/>
    </reaction>
</comment>
<comment type="catalytic activity">
    <reaction evidence="2">
        <text>N-dodecanoyl-(2S)-hydroxyglycine = dodecanamide + glyoxylate</text>
        <dbReference type="Rhea" id="RHEA:58624"/>
        <dbReference type="ChEBI" id="CHEBI:34726"/>
        <dbReference type="ChEBI" id="CHEBI:36655"/>
        <dbReference type="ChEBI" id="CHEBI:142693"/>
    </reaction>
</comment>
<comment type="catalytic activity">
    <reaction evidence="2">
        <text>N-(9Z,12Z,15Z)-octadecatrienoylglycine + 2 L-ascorbate + O2 = N-(9Z,12Z,15Z)-octadecatrienoyl-(2S)-hydroxyglycine + 2 monodehydro-L-ascorbate radical + H2O</text>
        <dbReference type="Rhea" id="RHEA:58548"/>
        <dbReference type="ChEBI" id="CHEBI:15377"/>
        <dbReference type="ChEBI" id="CHEBI:15379"/>
        <dbReference type="ChEBI" id="CHEBI:38290"/>
        <dbReference type="ChEBI" id="CHEBI:59513"/>
        <dbReference type="ChEBI" id="CHEBI:142679"/>
        <dbReference type="ChEBI" id="CHEBI:142697"/>
    </reaction>
</comment>
<comment type="catalytic activity">
    <reaction evidence="2">
        <text>N-(9Z,12Z,15Z)-octadecatrienoyl-(2S)-hydroxyglycine = (9Z,12Z,15Z)-octadecatrienamide + glyoxylate</text>
        <dbReference type="Rhea" id="RHEA:58644"/>
        <dbReference type="ChEBI" id="CHEBI:36655"/>
        <dbReference type="ChEBI" id="CHEBI:142684"/>
        <dbReference type="ChEBI" id="CHEBI:142697"/>
    </reaction>
</comment>
<comment type="catalytic activity">
    <reaction evidence="2">
        <text>N-(9Z-octadecenoyl)glycine + 2 L-ascorbate + O2 = N-(9Z-octadecenoyl)-(2S)-hydroxyglycine + 2 monodehydro-L-ascorbate radical + H2O</text>
        <dbReference type="Rhea" id="RHEA:58600"/>
        <dbReference type="ChEBI" id="CHEBI:15377"/>
        <dbReference type="ChEBI" id="CHEBI:15379"/>
        <dbReference type="ChEBI" id="CHEBI:38290"/>
        <dbReference type="ChEBI" id="CHEBI:59513"/>
        <dbReference type="ChEBI" id="CHEBI:133992"/>
        <dbReference type="ChEBI" id="CHEBI:142696"/>
    </reaction>
</comment>
<comment type="catalytic activity">
    <reaction evidence="2">
        <text>N-(9Z-octadecenoyl)-(2S)-hydroxyglycine = (9Z)-octadecenamide + glyoxylate</text>
        <dbReference type="Rhea" id="RHEA:58636"/>
        <dbReference type="ChEBI" id="CHEBI:36655"/>
        <dbReference type="ChEBI" id="CHEBI:116314"/>
        <dbReference type="ChEBI" id="CHEBI:142696"/>
    </reaction>
</comment>
<comment type="catalytic activity">
    <reaction evidence="2">
        <text>N-tetradecanoylglycine + 2 L-ascorbate + O2 = N-tetradecanoyl-(2S)-hydroxyglycine + 2 monodehydro-L-ascorbate radical + H2O</text>
        <dbReference type="Rhea" id="RHEA:58544"/>
        <dbReference type="ChEBI" id="CHEBI:15377"/>
        <dbReference type="ChEBI" id="CHEBI:15379"/>
        <dbReference type="ChEBI" id="CHEBI:38290"/>
        <dbReference type="ChEBI" id="CHEBI:59513"/>
        <dbReference type="ChEBI" id="CHEBI:86500"/>
        <dbReference type="ChEBI" id="CHEBI:142694"/>
    </reaction>
</comment>
<comment type="catalytic activity">
    <reaction evidence="2">
        <text>N-tetradecanoyl-(2S)-hydroxyglycine = tetradecamide + glyoxylate</text>
        <dbReference type="Rhea" id="RHEA:58632"/>
        <dbReference type="ChEBI" id="CHEBI:36655"/>
        <dbReference type="ChEBI" id="CHEBI:137125"/>
        <dbReference type="ChEBI" id="CHEBI:142694"/>
    </reaction>
</comment>
<comment type="catalytic activity">
    <reaction evidence="2">
        <text>N-decanoylglycine + 2 L-ascorbate + O2 = N-decanoyl-(2S)-hydroxyglycine + 2 monodehydro-L-ascorbate radical + H2O</text>
        <dbReference type="Rhea" id="RHEA:58608"/>
        <dbReference type="ChEBI" id="CHEBI:15377"/>
        <dbReference type="ChEBI" id="CHEBI:15379"/>
        <dbReference type="ChEBI" id="CHEBI:38290"/>
        <dbReference type="ChEBI" id="CHEBI:59513"/>
        <dbReference type="ChEBI" id="CHEBI:142680"/>
        <dbReference type="ChEBI" id="CHEBI:142692"/>
    </reaction>
</comment>
<comment type="catalytic activity">
    <reaction evidence="2">
        <text>N-decanoyl-(2S)-hydroxyglycine = decanamide + glyoxylate</text>
        <dbReference type="Rhea" id="RHEA:58620"/>
        <dbReference type="ChEBI" id="CHEBI:36655"/>
        <dbReference type="ChEBI" id="CHEBI:38833"/>
        <dbReference type="ChEBI" id="CHEBI:142692"/>
    </reaction>
</comment>
<comment type="catalytic activity">
    <reaction evidence="2">
        <text>N-octanoylglycine + 2 L-ascorbate + O2 = N-octanoyl-(2S)-hydroxyglycine + 2 monodehydro-L-ascorbate radical + H2O</text>
        <dbReference type="Rhea" id="RHEA:58612"/>
        <dbReference type="ChEBI" id="CHEBI:15377"/>
        <dbReference type="ChEBI" id="CHEBI:15379"/>
        <dbReference type="ChEBI" id="CHEBI:38290"/>
        <dbReference type="ChEBI" id="CHEBI:59513"/>
        <dbReference type="ChEBI" id="CHEBI:142681"/>
        <dbReference type="ChEBI" id="CHEBI:142691"/>
    </reaction>
</comment>
<comment type="catalytic activity">
    <reaction evidence="2">
        <text>N-octanoyl-(2S)-hydroxyglycine = octanamide + glyoxylate</text>
        <dbReference type="Rhea" id="RHEA:58616"/>
        <dbReference type="ChEBI" id="CHEBI:36655"/>
        <dbReference type="ChEBI" id="CHEBI:142682"/>
        <dbReference type="ChEBI" id="CHEBI:142691"/>
    </reaction>
</comment>
<comment type="cofactor">
    <cofactor evidence="2">
        <name>Zn(2+)</name>
        <dbReference type="ChEBI" id="CHEBI:29105"/>
    </cofactor>
    <text evidence="2">Binds one Zn(2+) ion per subunit.</text>
</comment>
<comment type="cofactor">
    <cofactor evidence="2">
        <name>Cu(2+)</name>
        <dbReference type="ChEBI" id="CHEBI:29036"/>
    </cofactor>
    <text evidence="2">Binds 2 Cu(2+) ions per subunit.</text>
</comment>
<comment type="activity regulation">
    <text evidence="2 3">PAM activity is inhibited by EDTA, phenylglyoxal and diethyl pyrocarbonate (By similarity). PAL activity is stimulated by cadmium and inhibited by mercury (By similarity).</text>
</comment>
<comment type="subunit">
    <text evidence="2">Monomer. Interacts with RASSF9.</text>
</comment>
<comment type="subcellular location">
    <subcellularLocation>
        <location evidence="1">Cytoplasmic vesicle</location>
        <location evidence="1">Secretory vesicle membrane</location>
        <topology evidence="1">Single-pass membrane protein</topology>
    </subcellularLocation>
    <text evidence="1">Secretory granules.</text>
</comment>
<comment type="disruption phenotype">
    <text evidence="6">Embryonic lethality between 14.5 days post coitum (dpc) and 15.5 dpc with severe edema (PubMed:16225857). Edema are probably due to cardiovascular deficits, characterized by thinning of the aorta and carotid arteries (PubMed:16225857). Loss of amidated peptides (PubMed:16225857).</text>
</comment>
<comment type="similarity">
    <text evidence="9">In the C-terminal section; belongs to the peptidyl-alpha-hydroxyglycine alpha-amidating lyase family.</text>
</comment>
<comment type="similarity">
    <text evidence="9">In the N-terminal section; belongs to the copper type II ascorbate-dependent monooxygenase family.</text>
</comment>
<dbReference type="EC" id="1.14.17.3" evidence="3"/>
<dbReference type="EC" id="4.3.2.5" evidence="3"/>
<dbReference type="EMBL" id="U79523">
    <property type="protein sequence ID" value="AAB38364.1"/>
    <property type="molecule type" value="mRNA"/>
</dbReference>
<dbReference type="EMBL" id="AC102191">
    <property type="status" value="NOT_ANNOTATED_CDS"/>
    <property type="molecule type" value="Genomic_DNA"/>
</dbReference>
<dbReference type="EMBL" id="AC157923">
    <property type="status" value="NOT_ANNOTATED_CDS"/>
    <property type="molecule type" value="Genomic_DNA"/>
</dbReference>
<dbReference type="CCDS" id="CCDS87863.1"/>
<dbReference type="RefSeq" id="NP_001344056.1">
    <property type="nucleotide sequence ID" value="NM_001357127.2"/>
</dbReference>
<dbReference type="RefSeq" id="NP_038654.2">
    <property type="nucleotide sequence ID" value="NM_013626.3"/>
</dbReference>
<dbReference type="RefSeq" id="XP_006529307.1">
    <property type="nucleotide sequence ID" value="XM_006529244.3"/>
</dbReference>
<dbReference type="SMR" id="P97467"/>
<dbReference type="BioGRID" id="202023">
    <property type="interactions" value="5"/>
</dbReference>
<dbReference type="FunCoup" id="P97467">
    <property type="interactions" value="451"/>
</dbReference>
<dbReference type="IntAct" id="P97467">
    <property type="interactions" value="2"/>
</dbReference>
<dbReference type="STRING" id="10090.ENSMUSP00000095228"/>
<dbReference type="GlyCosmos" id="P97467">
    <property type="glycosylation" value="1 site, No reported glycans"/>
</dbReference>
<dbReference type="GlyGen" id="P97467">
    <property type="glycosylation" value="2 sites"/>
</dbReference>
<dbReference type="iPTMnet" id="P97467"/>
<dbReference type="PhosphoSitePlus" id="P97467"/>
<dbReference type="SwissPalm" id="P97467"/>
<dbReference type="CPTAC" id="non-CPTAC-3445"/>
<dbReference type="jPOST" id="P97467"/>
<dbReference type="PaxDb" id="10090-ENSMUSP00000057112"/>
<dbReference type="ProteomicsDB" id="281968"/>
<dbReference type="Pumba" id="P97467"/>
<dbReference type="Antibodypedia" id="25194">
    <property type="antibodies" value="143 antibodies from 32 providers"/>
</dbReference>
<dbReference type="DNASU" id="18484"/>
<dbReference type="Ensembl" id="ENSMUST00000058762.15">
    <property type="protein sequence ID" value="ENSMUSP00000057112.9"/>
    <property type="gene ID" value="ENSMUSG00000026335.17"/>
</dbReference>
<dbReference type="GeneID" id="18484"/>
<dbReference type="KEGG" id="mmu:18484"/>
<dbReference type="UCSC" id="uc007cfp.1">
    <property type="organism name" value="mouse"/>
</dbReference>
<dbReference type="AGR" id="MGI:97475"/>
<dbReference type="CTD" id="5066"/>
<dbReference type="MGI" id="MGI:97475">
    <property type="gene designation" value="Pam"/>
</dbReference>
<dbReference type="VEuPathDB" id="HostDB:ENSMUSG00000026335"/>
<dbReference type="eggNOG" id="KOG3567">
    <property type="taxonomic scope" value="Eukaryota"/>
</dbReference>
<dbReference type="GeneTree" id="ENSGT00940000156369"/>
<dbReference type="InParanoid" id="P97467"/>
<dbReference type="OMA" id="AGDEMCN"/>
<dbReference type="OrthoDB" id="10018185at2759"/>
<dbReference type="PhylomeDB" id="P97467"/>
<dbReference type="TreeFam" id="TF320698"/>
<dbReference type="BRENDA" id="1.14.17.3">
    <property type="organism ID" value="3474"/>
</dbReference>
<dbReference type="BioGRID-ORCS" id="18484">
    <property type="hits" value="4 hits in 76 CRISPR screens"/>
</dbReference>
<dbReference type="CD-CODE" id="CE726F99">
    <property type="entry name" value="Postsynaptic density"/>
</dbReference>
<dbReference type="ChiTaRS" id="Pam">
    <property type="organism name" value="mouse"/>
</dbReference>
<dbReference type="PRO" id="PR:P97467"/>
<dbReference type="Proteomes" id="UP000000589">
    <property type="component" value="Chromosome 1"/>
</dbReference>
<dbReference type="RNAct" id="P97467">
    <property type="molecule type" value="protein"/>
</dbReference>
<dbReference type="Bgee" id="ENSMUSG00000026335">
    <property type="expression patterns" value="Expressed in aortic valve and 224 other cell types or tissues"/>
</dbReference>
<dbReference type="ExpressionAtlas" id="P97467">
    <property type="expression patterns" value="baseline and differential"/>
</dbReference>
<dbReference type="GO" id="GO:0005829">
    <property type="term" value="C:cytosol"/>
    <property type="evidence" value="ECO:0000304"/>
    <property type="project" value="MGI"/>
</dbReference>
<dbReference type="GO" id="GO:0005886">
    <property type="term" value="C:plasma membrane"/>
    <property type="evidence" value="ECO:0000304"/>
    <property type="project" value="MGI"/>
</dbReference>
<dbReference type="GO" id="GO:0030667">
    <property type="term" value="C:secretory granule membrane"/>
    <property type="evidence" value="ECO:0000250"/>
    <property type="project" value="UniProtKB"/>
</dbReference>
<dbReference type="GO" id="GO:0030658">
    <property type="term" value="C:transport vesicle membrane"/>
    <property type="evidence" value="ECO:0007669"/>
    <property type="project" value="UniProtKB-SubCell"/>
</dbReference>
<dbReference type="GO" id="GO:0005509">
    <property type="term" value="F:calcium ion binding"/>
    <property type="evidence" value="ECO:0000250"/>
    <property type="project" value="UniProtKB"/>
</dbReference>
<dbReference type="GO" id="GO:0005507">
    <property type="term" value="F:copper ion binding"/>
    <property type="evidence" value="ECO:0000250"/>
    <property type="project" value="UniProtKB"/>
</dbReference>
<dbReference type="GO" id="GO:0031418">
    <property type="term" value="F:L-ascorbic acid binding"/>
    <property type="evidence" value="ECO:0007669"/>
    <property type="project" value="UniProtKB-KW"/>
</dbReference>
<dbReference type="GO" id="GO:0004598">
    <property type="term" value="F:peptidylamidoglycolate lyase activity"/>
    <property type="evidence" value="ECO:0000250"/>
    <property type="project" value="UniProtKB"/>
</dbReference>
<dbReference type="GO" id="GO:0004504">
    <property type="term" value="F:peptidylglycine monooxygenase activity"/>
    <property type="evidence" value="ECO:0000250"/>
    <property type="project" value="UniProtKB"/>
</dbReference>
<dbReference type="GO" id="GO:0008270">
    <property type="term" value="F:zinc ion binding"/>
    <property type="evidence" value="ECO:0000250"/>
    <property type="project" value="UniProtKB"/>
</dbReference>
<dbReference type="GO" id="GO:0062112">
    <property type="term" value="P:fatty acid primary amide biosynthetic process"/>
    <property type="evidence" value="ECO:0000250"/>
    <property type="project" value="UniProtKB"/>
</dbReference>
<dbReference type="GO" id="GO:0001519">
    <property type="term" value="P:peptide amidation"/>
    <property type="evidence" value="ECO:0000315"/>
    <property type="project" value="UniProtKB"/>
</dbReference>
<dbReference type="GO" id="GO:0006518">
    <property type="term" value="P:peptide metabolic process"/>
    <property type="evidence" value="ECO:0000304"/>
    <property type="project" value="MGI"/>
</dbReference>
<dbReference type="CDD" id="cd14958">
    <property type="entry name" value="NHL_PAL_like"/>
    <property type="match status" value="1"/>
</dbReference>
<dbReference type="FunFam" id="2.60.120.230:FF:000002">
    <property type="entry name" value="Peptidyl-glycine alpha-amidating monooxygenase B"/>
    <property type="match status" value="1"/>
</dbReference>
<dbReference type="FunFam" id="2.120.10.30:FF:000016">
    <property type="entry name" value="peptidyl-glycine alpha-amidating monooxygenase isoform X1"/>
    <property type="match status" value="1"/>
</dbReference>
<dbReference type="FunFam" id="2.60.120.310:FF:000001">
    <property type="entry name" value="peptidyl-glycine alpha-amidating monooxygenase isoform X1"/>
    <property type="match status" value="1"/>
</dbReference>
<dbReference type="Gene3D" id="2.60.120.230">
    <property type="match status" value="1"/>
</dbReference>
<dbReference type="Gene3D" id="2.60.120.310">
    <property type="entry name" value="Copper type II, ascorbate-dependent monooxygenase, N-terminal domain"/>
    <property type="match status" value="1"/>
</dbReference>
<dbReference type="Gene3D" id="2.120.10.30">
    <property type="entry name" value="TolB, C-terminal domain"/>
    <property type="match status" value="1"/>
</dbReference>
<dbReference type="InterPro" id="IPR011042">
    <property type="entry name" value="6-blade_b-propeller_TolB-like"/>
</dbReference>
<dbReference type="InterPro" id="IPR014784">
    <property type="entry name" value="Cu2_ascorb_mOase-like_C"/>
</dbReference>
<dbReference type="InterPro" id="IPR020611">
    <property type="entry name" value="Cu2_ascorb_mOase_CS-1"/>
</dbReference>
<dbReference type="InterPro" id="IPR014783">
    <property type="entry name" value="Cu2_ascorb_mOase_CS-2"/>
</dbReference>
<dbReference type="InterPro" id="IPR000323">
    <property type="entry name" value="Cu2_ascorb_mOase_N"/>
</dbReference>
<dbReference type="InterPro" id="IPR036939">
    <property type="entry name" value="Cu2_ascorb_mOase_N_sf"/>
</dbReference>
<dbReference type="InterPro" id="IPR024548">
    <property type="entry name" value="Cu2_monoox_C"/>
</dbReference>
<dbReference type="InterPro" id="IPR001258">
    <property type="entry name" value="NHL_repeat"/>
</dbReference>
<dbReference type="InterPro" id="IPR000720">
    <property type="entry name" value="PHM/PAL"/>
</dbReference>
<dbReference type="InterPro" id="IPR008977">
    <property type="entry name" value="PHM/PNGase_F_dom_sf"/>
</dbReference>
<dbReference type="PANTHER" id="PTHR10680">
    <property type="entry name" value="PEPTIDYL-GLYCINE ALPHA-AMIDATING MONOOXYGENASE"/>
    <property type="match status" value="1"/>
</dbReference>
<dbReference type="PANTHER" id="PTHR10680:SF14">
    <property type="entry name" value="PEPTIDYL-GLYCINE ALPHA-AMIDATING MONOOXYGENASE"/>
    <property type="match status" value="1"/>
</dbReference>
<dbReference type="Pfam" id="PF03712">
    <property type="entry name" value="Cu2_monoox_C"/>
    <property type="match status" value="1"/>
</dbReference>
<dbReference type="Pfam" id="PF01082">
    <property type="entry name" value="Cu2_monooxygen"/>
    <property type="match status" value="1"/>
</dbReference>
<dbReference type="Pfam" id="PF01436">
    <property type="entry name" value="NHL"/>
    <property type="match status" value="3"/>
</dbReference>
<dbReference type="PRINTS" id="PR00790">
    <property type="entry name" value="PAMONOXGNASE"/>
</dbReference>
<dbReference type="SUPFAM" id="SSF63829">
    <property type="entry name" value="Calcium-dependent phosphotriesterase"/>
    <property type="match status" value="1"/>
</dbReference>
<dbReference type="SUPFAM" id="SSF49742">
    <property type="entry name" value="PHM/PNGase F"/>
    <property type="match status" value="2"/>
</dbReference>
<dbReference type="PROSITE" id="PS00084">
    <property type="entry name" value="CU2_MONOOXYGENASE_1"/>
    <property type="match status" value="1"/>
</dbReference>
<dbReference type="PROSITE" id="PS00085">
    <property type="entry name" value="CU2_MONOOXYGENASE_2"/>
    <property type="match status" value="1"/>
</dbReference>
<dbReference type="PROSITE" id="PS51125">
    <property type="entry name" value="NHL"/>
    <property type="match status" value="5"/>
</dbReference>
<reference key="1">
    <citation type="submission" date="1996-11" db="EMBL/GenBank/DDBJ databases">
        <authorList>
            <person name="Jeong J.H."/>
            <person name="Baek S.J."/>
            <person name="Park D.H."/>
        </authorList>
    </citation>
    <scope>NUCLEOTIDE SEQUENCE [MRNA]</scope>
</reference>
<reference key="2">
    <citation type="journal article" date="2009" name="PLoS Biol.">
        <title>Lineage-specific biology revealed by a finished genome assembly of the mouse.</title>
        <authorList>
            <person name="Church D.M."/>
            <person name="Goodstadt L."/>
            <person name="Hillier L.W."/>
            <person name="Zody M.C."/>
            <person name="Goldstein S."/>
            <person name="She X."/>
            <person name="Bult C.J."/>
            <person name="Agarwala R."/>
            <person name="Cherry J.L."/>
            <person name="DiCuccio M."/>
            <person name="Hlavina W."/>
            <person name="Kapustin Y."/>
            <person name="Meric P."/>
            <person name="Maglott D."/>
            <person name="Birtle Z."/>
            <person name="Marques A.C."/>
            <person name="Graves T."/>
            <person name="Zhou S."/>
            <person name="Teague B."/>
            <person name="Potamousis K."/>
            <person name="Churas C."/>
            <person name="Place M."/>
            <person name="Herschleb J."/>
            <person name="Runnheim R."/>
            <person name="Forrest D."/>
            <person name="Amos-Landgraf J."/>
            <person name="Schwartz D.C."/>
            <person name="Cheng Z."/>
            <person name="Lindblad-Toh K."/>
            <person name="Eichler E.E."/>
            <person name="Ponting C.P."/>
        </authorList>
    </citation>
    <scope>NUCLEOTIDE SEQUENCE [LARGE SCALE GENOMIC DNA]</scope>
    <source>
        <strain>C57BL/6J</strain>
    </source>
</reference>
<reference key="3">
    <citation type="journal article" date="2010" name="Cell">
        <title>A tissue-specific atlas of mouse protein phosphorylation and expression.</title>
        <authorList>
            <person name="Huttlin E.L."/>
            <person name="Jedrychowski M.P."/>
            <person name="Elias J.E."/>
            <person name="Goswami T."/>
            <person name="Rad R."/>
            <person name="Beausoleil S.A."/>
            <person name="Villen J."/>
            <person name="Haas W."/>
            <person name="Sowa M.E."/>
            <person name="Gygi S.P."/>
        </authorList>
    </citation>
    <scope>PHOSPHORYLATION [LARGE SCALE ANALYSIS] AT SER-924; SER-925 AND SER-935</scope>
    <scope>IDENTIFICATION BY MASS SPECTROMETRY [LARGE SCALE ANALYSIS]</scope>
    <source>
        <tissue>Brain</tissue>
        <tissue>Brown adipose tissue</tissue>
        <tissue>Heart</tissue>
        <tissue>Kidney</tissue>
        <tissue>Liver</tissue>
        <tissue>Lung</tissue>
        <tissue>Pancreas</tissue>
        <tissue>Spleen</tissue>
    </source>
</reference>
<reference key="4">
    <citation type="journal article" date="2016" name="J. Lipid Res.">
        <title>Glycine N-acyltransferase-like 3 is responsible for long-chain N-acylglycine formation in N18TG2 cells.</title>
        <authorList>
            <person name="Jeffries K.A."/>
            <person name="Dempsey D.R."/>
            <person name="Farrell E.K."/>
            <person name="Anderson R.L."/>
            <person name="Garbade G.J."/>
            <person name="Gurina T.S."/>
            <person name="Gruhonjic I."/>
            <person name="Gunderson C.A."/>
            <person name="Merkler D.J."/>
        </authorList>
    </citation>
    <scope>FUNCTION</scope>
</reference>
<reference key="5">
    <citation type="journal article" date="2005" name="Dev. Biol.">
        <title>Deletion of peptide amidation enzymatic activity leads to edema and embryonic lethality in the mouse.</title>
        <authorList>
            <person name="Czyzyk T.A."/>
            <person name="Ning Y."/>
            <person name="Hsu M.S."/>
            <person name="Peng B."/>
            <person name="Mains R.E."/>
            <person name="Eipper B.A."/>
            <person name="Pintar J.E."/>
        </authorList>
    </citation>
    <scope>FUNCTION</scope>
    <scope>DISRUPTION PHENOTYPE</scope>
</reference>
<organism>
    <name type="scientific">Mus musculus</name>
    <name type="common">Mouse</name>
    <dbReference type="NCBI Taxonomy" id="10090"/>
    <lineage>
        <taxon>Eukaryota</taxon>
        <taxon>Metazoa</taxon>
        <taxon>Chordata</taxon>
        <taxon>Craniata</taxon>
        <taxon>Vertebrata</taxon>
        <taxon>Euteleostomi</taxon>
        <taxon>Mammalia</taxon>
        <taxon>Eutheria</taxon>
        <taxon>Euarchontoglires</taxon>
        <taxon>Glires</taxon>
        <taxon>Rodentia</taxon>
        <taxon>Myomorpha</taxon>
        <taxon>Muroidea</taxon>
        <taxon>Muridae</taxon>
        <taxon>Murinae</taxon>
        <taxon>Mus</taxon>
        <taxon>Mus</taxon>
    </lineage>
</organism>
<sequence length="979" mass="108963">MAGRARSRLLLLLGLLALQSSCLAFRSPLSVFKRFKETTRSFSNECLGTTRPITPIDSSDFTLDIRMPGVTPKESDTYFCMSMRLPVDEEAFVIDFKPRASMDTVHHMLLFGCNMPSSTGSYWFCDEGTCTDKANILYAWARNAPPTRLPKGVGFRVGGETGSKYFVLQVHYGDISAFRDNHKDCSGVSLHLTRVPQPLIAGMYLMMSVNTVIPPGEKVVNSDISCHYKMYPMHVFAYRVHTHHLGKVVSGYRVRNGQWTLIGRQSPQLPQAFYPVEHPVDVAFGDILAARCVFTGEGRTEATHIGGTSSDEMCNLYIMYYMEAKHAVSFMTCTQNVAPDMFRTIPEEANIPIPVKSDMVMIHGHHKETENKEKSALIQQPKQGEEEAFEQGDFYSLLSKLLGEREDVVHVHKYNPTEKTESGSDLVAEIANVVQKKDLGRSDAREGAEHEEGGNAILVRDRIHKFHRLESTLRPAESRALSFQQPGEGPWEPELAGDFHVEEALEWPGVYLLPGQVSGVALDSKNNLVIFHRGDHVWDGNSFDSKFVYQQRGLGPIEEDTILVIDPNKAEILQSSGKNLFYLPHGLSIDTDGNYWVTDVALHQVFKLEPRSKEGPLLVLGRSMQPGSDQNHFCQPTDVAVEPSTGAVFVSDGYCNSRIVQFSPSGKFITQWGEESSGSSPKPGQFSVPHSLALVPHLNQLCVADRENGRIQCFKTDTKEFVREIKHASFGRNVFAISYIPGFLFAVNGKPYFGDQEPVQGFVMNFSSGEIIDVFKPVRKHFDMPHDIVASEDGTVYIGDAHTNTVWKFTLTESRLEVEHRSVKKAGIEVPEIKEAEAVVEPKVKNKPTSSELQKMQEKKKLIKDPGSGVPVVLITTLLVIPVVVLLAIAMFIRWKKSRAFGDHDRKLESSSGRVLGRLRGKGSSGLNLGNFFASRKGYSRKGFDRVSTEGSDQEKDEDDGSESEEEYSAPLPTPAPSS</sequence>
<keyword id="KW-0106">Calcium</keyword>
<keyword id="KW-0165">Cleavage on pair of basic residues</keyword>
<keyword id="KW-0186">Copper</keyword>
<keyword id="KW-0968">Cytoplasmic vesicle</keyword>
<keyword id="KW-1015">Disulfide bond</keyword>
<keyword id="KW-0325">Glycoprotein</keyword>
<keyword id="KW-0443">Lipid metabolism</keyword>
<keyword id="KW-0456">Lyase</keyword>
<keyword id="KW-0472">Membrane</keyword>
<keyword id="KW-0479">Metal-binding</keyword>
<keyword id="KW-0503">Monooxygenase</keyword>
<keyword id="KW-0511">Multifunctional enzyme</keyword>
<keyword id="KW-0560">Oxidoreductase</keyword>
<keyword id="KW-0597">Phosphoprotein</keyword>
<keyword id="KW-1185">Reference proteome</keyword>
<keyword id="KW-0677">Repeat</keyword>
<keyword id="KW-0732">Signal</keyword>
<keyword id="KW-0812">Transmembrane</keyword>
<keyword id="KW-1133">Transmembrane helix</keyword>
<keyword id="KW-0847">Vitamin C</keyword>
<keyword id="KW-0862">Zinc</keyword>